<evidence type="ECO:0000255" key="1">
    <source>
        <dbReference type="HAMAP-Rule" id="MF_01374"/>
    </source>
</evidence>
<feature type="chain" id="PRO_1000144751" description="Hydroxyacylglutathione hydrolase">
    <location>
        <begin position="1"/>
        <end position="252"/>
    </location>
</feature>
<feature type="binding site" evidence="1">
    <location>
        <position position="54"/>
    </location>
    <ligand>
        <name>Zn(2+)</name>
        <dbReference type="ChEBI" id="CHEBI:29105"/>
        <label>1</label>
    </ligand>
</feature>
<feature type="binding site" evidence="1">
    <location>
        <position position="56"/>
    </location>
    <ligand>
        <name>Zn(2+)</name>
        <dbReference type="ChEBI" id="CHEBI:29105"/>
        <label>1</label>
    </ligand>
</feature>
<feature type="binding site" evidence="1">
    <location>
        <position position="58"/>
    </location>
    <ligand>
        <name>Zn(2+)</name>
        <dbReference type="ChEBI" id="CHEBI:29105"/>
        <label>2</label>
    </ligand>
</feature>
<feature type="binding site" evidence="1">
    <location>
        <position position="59"/>
    </location>
    <ligand>
        <name>Zn(2+)</name>
        <dbReference type="ChEBI" id="CHEBI:29105"/>
        <label>2</label>
    </ligand>
</feature>
<feature type="binding site" evidence="1">
    <location>
        <position position="111"/>
    </location>
    <ligand>
        <name>Zn(2+)</name>
        <dbReference type="ChEBI" id="CHEBI:29105"/>
        <label>1</label>
    </ligand>
</feature>
<feature type="binding site" evidence="1">
    <location>
        <position position="128"/>
    </location>
    <ligand>
        <name>Zn(2+)</name>
        <dbReference type="ChEBI" id="CHEBI:29105"/>
        <label>1</label>
    </ligand>
</feature>
<feature type="binding site" evidence="1">
    <location>
        <position position="128"/>
    </location>
    <ligand>
        <name>Zn(2+)</name>
        <dbReference type="ChEBI" id="CHEBI:29105"/>
        <label>2</label>
    </ligand>
</feature>
<feature type="binding site" evidence="1">
    <location>
        <position position="166"/>
    </location>
    <ligand>
        <name>Zn(2+)</name>
        <dbReference type="ChEBI" id="CHEBI:29105"/>
        <label>2</label>
    </ligand>
</feature>
<accession>B6EJV4</accession>
<proteinExistence type="inferred from homology"/>
<dbReference type="EC" id="3.1.2.6" evidence="1"/>
<dbReference type="EMBL" id="FM178379">
    <property type="protein sequence ID" value="CAQ80085.1"/>
    <property type="molecule type" value="Genomic_DNA"/>
</dbReference>
<dbReference type="RefSeq" id="WP_012550893.1">
    <property type="nucleotide sequence ID" value="NC_011312.1"/>
</dbReference>
<dbReference type="SMR" id="B6EJV4"/>
<dbReference type="KEGG" id="vsa:VSAL_I2401"/>
<dbReference type="eggNOG" id="COG0491">
    <property type="taxonomic scope" value="Bacteria"/>
</dbReference>
<dbReference type="HOGENOM" id="CLU_030571_4_1_6"/>
<dbReference type="UniPathway" id="UPA00619">
    <property type="reaction ID" value="UER00676"/>
</dbReference>
<dbReference type="Proteomes" id="UP000001730">
    <property type="component" value="Chromosome 1"/>
</dbReference>
<dbReference type="GO" id="GO:0004416">
    <property type="term" value="F:hydroxyacylglutathione hydrolase activity"/>
    <property type="evidence" value="ECO:0007669"/>
    <property type="project" value="UniProtKB-UniRule"/>
</dbReference>
<dbReference type="GO" id="GO:0046872">
    <property type="term" value="F:metal ion binding"/>
    <property type="evidence" value="ECO:0007669"/>
    <property type="project" value="UniProtKB-KW"/>
</dbReference>
<dbReference type="GO" id="GO:0019243">
    <property type="term" value="P:methylglyoxal catabolic process to D-lactate via S-lactoyl-glutathione"/>
    <property type="evidence" value="ECO:0007669"/>
    <property type="project" value="InterPro"/>
</dbReference>
<dbReference type="CDD" id="cd07723">
    <property type="entry name" value="hydroxyacylglutathione_hydrolase_MBL-fold"/>
    <property type="match status" value="1"/>
</dbReference>
<dbReference type="Gene3D" id="3.60.15.10">
    <property type="entry name" value="Ribonuclease Z/Hydroxyacylglutathione hydrolase-like"/>
    <property type="match status" value="1"/>
</dbReference>
<dbReference type="HAMAP" id="MF_01374">
    <property type="entry name" value="Glyoxalase_2"/>
    <property type="match status" value="1"/>
</dbReference>
<dbReference type="InterPro" id="IPR035680">
    <property type="entry name" value="Clx_II_MBL"/>
</dbReference>
<dbReference type="InterPro" id="IPR050110">
    <property type="entry name" value="Glyoxalase_II_hydrolase"/>
</dbReference>
<dbReference type="InterPro" id="IPR032282">
    <property type="entry name" value="HAGH_C"/>
</dbReference>
<dbReference type="InterPro" id="IPR017782">
    <property type="entry name" value="Hydroxyacylglutathione_Hdrlase"/>
</dbReference>
<dbReference type="InterPro" id="IPR001279">
    <property type="entry name" value="Metallo-B-lactamas"/>
</dbReference>
<dbReference type="InterPro" id="IPR036866">
    <property type="entry name" value="RibonucZ/Hydroxyglut_hydro"/>
</dbReference>
<dbReference type="NCBIfam" id="TIGR03413">
    <property type="entry name" value="GSH_gloB"/>
    <property type="match status" value="1"/>
</dbReference>
<dbReference type="PANTHER" id="PTHR43705">
    <property type="entry name" value="HYDROXYACYLGLUTATHIONE HYDROLASE"/>
    <property type="match status" value="1"/>
</dbReference>
<dbReference type="PANTHER" id="PTHR43705:SF1">
    <property type="entry name" value="HYDROXYACYLGLUTATHIONE HYDROLASE GLOB"/>
    <property type="match status" value="1"/>
</dbReference>
<dbReference type="Pfam" id="PF16123">
    <property type="entry name" value="HAGH_C"/>
    <property type="match status" value="1"/>
</dbReference>
<dbReference type="Pfam" id="PF00753">
    <property type="entry name" value="Lactamase_B"/>
    <property type="match status" value="1"/>
</dbReference>
<dbReference type="PIRSF" id="PIRSF005457">
    <property type="entry name" value="Glx"/>
    <property type="match status" value="1"/>
</dbReference>
<dbReference type="SMART" id="SM00849">
    <property type="entry name" value="Lactamase_B"/>
    <property type="match status" value="1"/>
</dbReference>
<dbReference type="SUPFAM" id="SSF56281">
    <property type="entry name" value="Metallo-hydrolase/oxidoreductase"/>
    <property type="match status" value="1"/>
</dbReference>
<protein>
    <recommendedName>
        <fullName evidence="1">Hydroxyacylglutathione hydrolase</fullName>
        <ecNumber evidence="1">3.1.2.6</ecNumber>
    </recommendedName>
    <alternativeName>
        <fullName evidence="1">Glyoxalase II</fullName>
        <shortName evidence="1">Glx II</shortName>
    </alternativeName>
</protein>
<sequence length="252" mass="28114">MLLIKSIPAFNDNYIWLIHNNDNHCVVVDPGEAAPVLACLKEHGLILDAILITHHHHDHIGGVPELVRQFPNINVVGPENEPIPTLTHPVGDGDFVELFNEKFMVLGVEGHTKGHIAYIGDEKLFCGDTLFSAGCGRLFEGTAEQMFHSLQKLAALPDETEVYCAHEYTASNLAFALAVEPDNDYLQQYREKVLRLRANGKATIPTTMQREKLINPFLRTSEASVKQAVSSKVENDSEVATFAALRRWKDEF</sequence>
<comment type="function">
    <text evidence="1">Thiolesterase that catalyzes the hydrolysis of S-D-lactoyl-glutathione to form glutathione and D-lactic acid.</text>
</comment>
<comment type="catalytic activity">
    <reaction evidence="1">
        <text>an S-(2-hydroxyacyl)glutathione + H2O = a 2-hydroxy carboxylate + glutathione + H(+)</text>
        <dbReference type="Rhea" id="RHEA:21864"/>
        <dbReference type="ChEBI" id="CHEBI:15377"/>
        <dbReference type="ChEBI" id="CHEBI:15378"/>
        <dbReference type="ChEBI" id="CHEBI:57925"/>
        <dbReference type="ChEBI" id="CHEBI:58896"/>
        <dbReference type="ChEBI" id="CHEBI:71261"/>
        <dbReference type="EC" id="3.1.2.6"/>
    </reaction>
</comment>
<comment type="cofactor">
    <cofactor evidence="1">
        <name>Zn(2+)</name>
        <dbReference type="ChEBI" id="CHEBI:29105"/>
    </cofactor>
    <text evidence="1">Binds 2 Zn(2+) ions per subunit.</text>
</comment>
<comment type="pathway">
    <text evidence="1">Secondary metabolite metabolism; methylglyoxal degradation; (R)-lactate from methylglyoxal: step 2/2.</text>
</comment>
<comment type="subunit">
    <text evidence="1">Monomer.</text>
</comment>
<comment type="similarity">
    <text evidence="1">Belongs to the metallo-beta-lactamase superfamily. Glyoxalase II family.</text>
</comment>
<name>GLO2_ALISL</name>
<keyword id="KW-0378">Hydrolase</keyword>
<keyword id="KW-0479">Metal-binding</keyword>
<keyword id="KW-0862">Zinc</keyword>
<gene>
    <name evidence="1" type="primary">gloB</name>
    <name type="ordered locus">VSAL_I2401</name>
</gene>
<organism>
    <name type="scientific">Aliivibrio salmonicida (strain LFI1238)</name>
    <name type="common">Vibrio salmonicida (strain LFI1238)</name>
    <dbReference type="NCBI Taxonomy" id="316275"/>
    <lineage>
        <taxon>Bacteria</taxon>
        <taxon>Pseudomonadati</taxon>
        <taxon>Pseudomonadota</taxon>
        <taxon>Gammaproteobacteria</taxon>
        <taxon>Vibrionales</taxon>
        <taxon>Vibrionaceae</taxon>
        <taxon>Aliivibrio</taxon>
    </lineage>
</organism>
<reference key="1">
    <citation type="journal article" date="2008" name="BMC Genomics">
        <title>The genome sequence of the fish pathogen Aliivibrio salmonicida strain LFI1238 shows extensive evidence of gene decay.</title>
        <authorList>
            <person name="Hjerde E."/>
            <person name="Lorentzen M.S."/>
            <person name="Holden M.T."/>
            <person name="Seeger K."/>
            <person name="Paulsen S."/>
            <person name="Bason N."/>
            <person name="Churcher C."/>
            <person name="Harris D."/>
            <person name="Norbertczak H."/>
            <person name="Quail M.A."/>
            <person name="Sanders S."/>
            <person name="Thurston S."/>
            <person name="Parkhill J."/>
            <person name="Willassen N.P."/>
            <person name="Thomson N.R."/>
        </authorList>
    </citation>
    <scope>NUCLEOTIDE SEQUENCE [LARGE SCALE GENOMIC DNA]</scope>
    <source>
        <strain>LFI1238</strain>
    </source>
</reference>